<organism>
    <name type="scientific">Ajellomyces capsulatus (strain H143)</name>
    <name type="common">Darling's disease fungus</name>
    <name type="synonym">Histoplasma capsulatum</name>
    <dbReference type="NCBI Taxonomy" id="544712"/>
    <lineage>
        <taxon>Eukaryota</taxon>
        <taxon>Fungi</taxon>
        <taxon>Dikarya</taxon>
        <taxon>Ascomycota</taxon>
        <taxon>Pezizomycotina</taxon>
        <taxon>Eurotiomycetes</taxon>
        <taxon>Eurotiomycetidae</taxon>
        <taxon>Onygenales</taxon>
        <taxon>Ajellomycetaceae</taxon>
        <taxon>Histoplasma</taxon>
    </lineage>
</organism>
<evidence type="ECO:0000255" key="1">
    <source>
        <dbReference type="HAMAP-Rule" id="MF_03137"/>
    </source>
</evidence>
<evidence type="ECO:0000305" key="2"/>
<accession>C6HPI9</accession>
<reference key="1">
    <citation type="submission" date="2009-05" db="EMBL/GenBank/DDBJ databases">
        <title>The genome sequence of Ajellomyces capsulatus strain H143.</title>
        <authorList>
            <person name="Champion M."/>
            <person name="Cuomo C.A."/>
            <person name="Ma L.-J."/>
            <person name="Henn M.R."/>
            <person name="Sil A."/>
            <person name="Goldman B."/>
            <person name="Young S.K."/>
            <person name="Kodira C.D."/>
            <person name="Zeng Q."/>
            <person name="Koehrsen M."/>
            <person name="Alvarado L."/>
            <person name="Berlin A.M."/>
            <person name="Borenstein D."/>
            <person name="Chen Z."/>
            <person name="Engels R."/>
            <person name="Freedman E."/>
            <person name="Gellesch M."/>
            <person name="Goldberg J."/>
            <person name="Griggs A."/>
            <person name="Gujja S."/>
            <person name="Heiman D.I."/>
            <person name="Hepburn T.A."/>
            <person name="Howarth C."/>
            <person name="Jen D."/>
            <person name="Larson L."/>
            <person name="Lewis B."/>
            <person name="Mehta T."/>
            <person name="Park D."/>
            <person name="Pearson M."/>
            <person name="Roberts A."/>
            <person name="Saif S."/>
            <person name="Shea T.D."/>
            <person name="Shenoy N."/>
            <person name="Sisk P."/>
            <person name="Stolte C."/>
            <person name="Sykes S."/>
            <person name="Walk T."/>
            <person name="White J."/>
            <person name="Yandava C."/>
            <person name="Klein B."/>
            <person name="McEwen J.G."/>
            <person name="Puccia R."/>
            <person name="Goldman G.H."/>
            <person name="Felipe M.S."/>
            <person name="Nino-Vega G."/>
            <person name="San-Blas G."/>
            <person name="Taylor J.W."/>
            <person name="Mendoza L."/>
            <person name="Galagan J.E."/>
            <person name="Nusbaum C."/>
            <person name="Birren B.W."/>
        </authorList>
    </citation>
    <scope>NUCLEOTIDE SEQUENCE [LARGE SCALE GENOMIC DNA]</scope>
    <source>
        <strain>H143</strain>
    </source>
</reference>
<sequence>MRGCLQSVKWLTSALRPSQSLASSTRYPRRLLSTSAPRNAQVRKPASEVEQRIAAIPIERFRNFCIVAHVDHGKSTLSDRLLELTGTIEAGANKQVLDKLDVERERGITVKAQTCSMLYNHQGEDYLLHLVDTPGHVDFRAEVSRSYASCGGALLLVDASQGIQAQTVANFYLAFAEGLKLVPVINKVDLPSADPQRALDQMKNTFELDPESAVLVSAKTGLNVSQLLPTVIEQIPAPVGDRTKPLRMLLVDSWYSTYKGVILLVRLFDGEIRAGDQVVSFATGLKYTVGEVGIMYPGRTAQSVLRAGQVGYIYFNPAMKRSQEAKVGDTYTKVGSERLVQPLPGFEEPKAMVFVAAYPVDASDFPHLEDSINQLILNDRSVTLQKESSEALGAGFRLGFLGTLHCSVFEDRLRQEHGASIIITPPTVPFKVIWKDGKEEIITNPALFPEEDTLRAKVTELQEPFVLATLTFPEEYLGRVIELCESNRGEQKSLEFFTSTQVILKYELPLAQLVDDFFGKLKGSTKGYASLDYEESGWRRSNISKLQLLVNKVPVDAVSRVVHSSQVQRLGRLWVSKFKEHVDRQMFEVVIQAAAGRNVVARESIKPFRKDVLQKLHAADVTRRKKLLEKQKEGRKKLKAVGNVVIEHKAFQAFLAK</sequence>
<dbReference type="EC" id="3.6.5.-"/>
<dbReference type="EMBL" id="GG692433">
    <property type="protein sequence ID" value="EER37861.1"/>
    <property type="status" value="ALT_SEQ"/>
    <property type="molecule type" value="Genomic_DNA"/>
</dbReference>
<dbReference type="SMR" id="C6HPI9"/>
<dbReference type="STRING" id="544712.C6HPI9"/>
<dbReference type="eggNOG" id="KOG0462">
    <property type="taxonomic scope" value="Eukaryota"/>
</dbReference>
<dbReference type="HOGENOM" id="CLU_009995_3_1_1"/>
<dbReference type="OrthoDB" id="3487at299071"/>
<dbReference type="Proteomes" id="UP000002624">
    <property type="component" value="Unassembled WGS sequence"/>
</dbReference>
<dbReference type="GO" id="GO:0005743">
    <property type="term" value="C:mitochondrial inner membrane"/>
    <property type="evidence" value="ECO:0007669"/>
    <property type="project" value="UniProtKB-SubCell"/>
</dbReference>
<dbReference type="GO" id="GO:0005759">
    <property type="term" value="C:mitochondrial matrix"/>
    <property type="evidence" value="ECO:0007669"/>
    <property type="project" value="UniProtKB-UniRule"/>
</dbReference>
<dbReference type="GO" id="GO:0005525">
    <property type="term" value="F:GTP binding"/>
    <property type="evidence" value="ECO:0007669"/>
    <property type="project" value="UniProtKB-UniRule"/>
</dbReference>
<dbReference type="GO" id="GO:0003924">
    <property type="term" value="F:GTPase activity"/>
    <property type="evidence" value="ECO:0007669"/>
    <property type="project" value="UniProtKB-UniRule"/>
</dbReference>
<dbReference type="GO" id="GO:0097177">
    <property type="term" value="F:mitochondrial ribosome binding"/>
    <property type="evidence" value="ECO:0007669"/>
    <property type="project" value="TreeGrafter"/>
</dbReference>
<dbReference type="GO" id="GO:0045727">
    <property type="term" value="P:positive regulation of translation"/>
    <property type="evidence" value="ECO:0007669"/>
    <property type="project" value="UniProtKB-UniRule"/>
</dbReference>
<dbReference type="GO" id="GO:0006412">
    <property type="term" value="P:translation"/>
    <property type="evidence" value="ECO:0007669"/>
    <property type="project" value="UniProtKB-KW"/>
</dbReference>
<dbReference type="CDD" id="cd03699">
    <property type="entry name" value="EF4_II"/>
    <property type="match status" value="1"/>
</dbReference>
<dbReference type="CDD" id="cd16260">
    <property type="entry name" value="EF4_III"/>
    <property type="match status" value="1"/>
</dbReference>
<dbReference type="CDD" id="cd01890">
    <property type="entry name" value="LepA"/>
    <property type="match status" value="1"/>
</dbReference>
<dbReference type="CDD" id="cd03709">
    <property type="entry name" value="lepA_C"/>
    <property type="match status" value="1"/>
</dbReference>
<dbReference type="FunFam" id="3.40.50.300:FF:000078">
    <property type="entry name" value="Elongation factor 4"/>
    <property type="match status" value="1"/>
</dbReference>
<dbReference type="FunFam" id="2.40.30.10:FF:000015">
    <property type="entry name" value="Translation factor GUF1, mitochondrial"/>
    <property type="match status" value="1"/>
</dbReference>
<dbReference type="FunFam" id="3.30.70.240:FF:000007">
    <property type="entry name" value="Translation factor GUF1, mitochondrial"/>
    <property type="match status" value="1"/>
</dbReference>
<dbReference type="FunFam" id="3.30.70.2570:FF:000001">
    <property type="entry name" value="Translation factor GUF1, mitochondrial"/>
    <property type="match status" value="1"/>
</dbReference>
<dbReference type="FunFam" id="3.30.70.870:FF:000004">
    <property type="entry name" value="Translation factor GUF1, mitochondrial"/>
    <property type="match status" value="1"/>
</dbReference>
<dbReference type="Gene3D" id="3.30.70.240">
    <property type="match status" value="1"/>
</dbReference>
<dbReference type="Gene3D" id="3.30.70.2570">
    <property type="entry name" value="Elongation factor 4, C-terminal domain"/>
    <property type="match status" value="1"/>
</dbReference>
<dbReference type="Gene3D" id="3.30.70.870">
    <property type="entry name" value="Elongation Factor G (Translational Gtpase), domain 3"/>
    <property type="match status" value="1"/>
</dbReference>
<dbReference type="Gene3D" id="3.40.50.300">
    <property type="entry name" value="P-loop containing nucleotide triphosphate hydrolases"/>
    <property type="match status" value="1"/>
</dbReference>
<dbReference type="Gene3D" id="2.40.30.10">
    <property type="entry name" value="Translation factors"/>
    <property type="match status" value="1"/>
</dbReference>
<dbReference type="HAMAP" id="MF_00071">
    <property type="entry name" value="LepA"/>
    <property type="match status" value="1"/>
</dbReference>
<dbReference type="InterPro" id="IPR006297">
    <property type="entry name" value="EF-4"/>
</dbReference>
<dbReference type="InterPro" id="IPR035647">
    <property type="entry name" value="EFG_III/V"/>
</dbReference>
<dbReference type="InterPro" id="IPR000640">
    <property type="entry name" value="EFG_V-like"/>
</dbReference>
<dbReference type="InterPro" id="IPR031157">
    <property type="entry name" value="G_TR_CS"/>
</dbReference>
<dbReference type="InterPro" id="IPR038363">
    <property type="entry name" value="LepA_C_sf"/>
</dbReference>
<dbReference type="InterPro" id="IPR013842">
    <property type="entry name" value="LepA_CTD"/>
</dbReference>
<dbReference type="InterPro" id="IPR035654">
    <property type="entry name" value="LepA_IV"/>
</dbReference>
<dbReference type="InterPro" id="IPR027417">
    <property type="entry name" value="P-loop_NTPase"/>
</dbReference>
<dbReference type="InterPro" id="IPR005225">
    <property type="entry name" value="Small_GTP-bd"/>
</dbReference>
<dbReference type="InterPro" id="IPR000795">
    <property type="entry name" value="T_Tr_GTP-bd_dom"/>
</dbReference>
<dbReference type="NCBIfam" id="TIGR01393">
    <property type="entry name" value="lepA"/>
    <property type="match status" value="1"/>
</dbReference>
<dbReference type="NCBIfam" id="TIGR00231">
    <property type="entry name" value="small_GTP"/>
    <property type="match status" value="1"/>
</dbReference>
<dbReference type="PANTHER" id="PTHR43512:SF7">
    <property type="entry name" value="TRANSLATION FACTOR GUF1, MITOCHONDRIAL"/>
    <property type="match status" value="1"/>
</dbReference>
<dbReference type="PANTHER" id="PTHR43512">
    <property type="entry name" value="TRANSLATION FACTOR GUF1-RELATED"/>
    <property type="match status" value="1"/>
</dbReference>
<dbReference type="Pfam" id="PF00679">
    <property type="entry name" value="EFG_C"/>
    <property type="match status" value="1"/>
</dbReference>
<dbReference type="Pfam" id="PF00009">
    <property type="entry name" value="GTP_EFTU"/>
    <property type="match status" value="1"/>
</dbReference>
<dbReference type="Pfam" id="PF06421">
    <property type="entry name" value="LepA_C"/>
    <property type="match status" value="1"/>
</dbReference>
<dbReference type="PRINTS" id="PR00315">
    <property type="entry name" value="ELONGATNFCT"/>
</dbReference>
<dbReference type="SUPFAM" id="SSF54980">
    <property type="entry name" value="EF-G C-terminal domain-like"/>
    <property type="match status" value="2"/>
</dbReference>
<dbReference type="SUPFAM" id="SSF52540">
    <property type="entry name" value="P-loop containing nucleoside triphosphate hydrolases"/>
    <property type="match status" value="1"/>
</dbReference>
<dbReference type="PROSITE" id="PS00301">
    <property type="entry name" value="G_TR_1"/>
    <property type="match status" value="1"/>
</dbReference>
<dbReference type="PROSITE" id="PS51722">
    <property type="entry name" value="G_TR_2"/>
    <property type="match status" value="1"/>
</dbReference>
<proteinExistence type="inferred from homology"/>
<protein>
    <recommendedName>
        <fullName evidence="1">Translation factor GUF1, mitochondrial</fullName>
        <ecNumber>3.6.5.-</ecNumber>
    </recommendedName>
    <alternativeName>
        <fullName evidence="1">Elongation factor 4 homolog</fullName>
        <shortName evidence="1">EF-4</shortName>
    </alternativeName>
    <alternativeName>
        <fullName evidence="1">GTPase GUF1</fullName>
    </alternativeName>
    <alternativeName>
        <fullName evidence="1">Ribosomal back-translocase</fullName>
    </alternativeName>
</protein>
<comment type="function">
    <text evidence="1">Promotes mitochondrial protein synthesis. May act as a fidelity factor of the translation reaction, by catalyzing a one-codon backward translocation of tRNAs on improperly translocated ribosomes. Binds to mitochondrial ribosomes in a GTP-dependent manner.</text>
</comment>
<comment type="catalytic activity">
    <reaction evidence="1">
        <text>GTP + H2O = GDP + phosphate + H(+)</text>
        <dbReference type="Rhea" id="RHEA:19669"/>
        <dbReference type="ChEBI" id="CHEBI:15377"/>
        <dbReference type="ChEBI" id="CHEBI:15378"/>
        <dbReference type="ChEBI" id="CHEBI:37565"/>
        <dbReference type="ChEBI" id="CHEBI:43474"/>
        <dbReference type="ChEBI" id="CHEBI:58189"/>
    </reaction>
</comment>
<comment type="subcellular location">
    <subcellularLocation>
        <location evidence="1">Mitochondrion inner membrane</location>
        <topology evidence="1">Peripheral membrane protein</topology>
        <orientation evidence="1">Matrix side</orientation>
    </subcellularLocation>
</comment>
<comment type="similarity">
    <text evidence="2">Belongs to the TRAFAC class translation factor GTPase superfamily. Classic translation factor GTPase family. LepA subfamily.</text>
</comment>
<comment type="sequence caution" evidence="2">
    <conflict type="erroneous gene model prediction">
        <sequence resource="EMBL-CDS" id="EER37861"/>
    </conflict>
</comment>
<gene>
    <name evidence="1" type="primary">GUF1</name>
    <name type="ORF">HCDG_08120</name>
</gene>
<name>GUF1_AJECH</name>
<keyword id="KW-0342">GTP-binding</keyword>
<keyword id="KW-0378">Hydrolase</keyword>
<keyword id="KW-0472">Membrane</keyword>
<keyword id="KW-0496">Mitochondrion</keyword>
<keyword id="KW-0999">Mitochondrion inner membrane</keyword>
<keyword id="KW-0547">Nucleotide-binding</keyword>
<keyword id="KW-0648">Protein biosynthesis</keyword>
<keyword id="KW-1185">Reference proteome</keyword>
<keyword id="KW-0809">Transit peptide</keyword>
<feature type="transit peptide" description="Mitochondrion" evidence="1">
    <location>
        <begin position="1"/>
        <end position="39"/>
    </location>
</feature>
<feature type="chain" id="PRO_0000402867" description="Translation factor GUF1, mitochondrial">
    <location>
        <begin position="40"/>
        <end position="657"/>
    </location>
</feature>
<feature type="domain" description="tr-type G">
    <location>
        <begin position="59"/>
        <end position="239"/>
    </location>
</feature>
<feature type="binding site" evidence="1">
    <location>
        <begin position="121"/>
        <end position="128"/>
    </location>
    <ligand>
        <name>GTP</name>
        <dbReference type="ChEBI" id="CHEBI:37565"/>
    </ligand>
</feature>
<feature type="binding site" evidence="1">
    <location>
        <begin position="185"/>
        <end position="189"/>
    </location>
    <ligand>
        <name>GTP</name>
        <dbReference type="ChEBI" id="CHEBI:37565"/>
    </ligand>
</feature>
<feature type="binding site" evidence="1">
    <location>
        <begin position="239"/>
        <end position="242"/>
    </location>
    <ligand>
        <name>GTP</name>
        <dbReference type="ChEBI" id="CHEBI:37565"/>
    </ligand>
</feature>